<evidence type="ECO:0000250" key="1">
    <source>
        <dbReference type="UniProtKB" id="Q6IAA8"/>
    </source>
</evidence>
<evidence type="ECO:0000269" key="2">
    <source>
    </source>
</evidence>
<evidence type="ECO:0000303" key="3">
    <source>
    </source>
</evidence>
<evidence type="ECO:0000305" key="4"/>
<evidence type="ECO:0000312" key="5">
    <source>
        <dbReference type="FlyBase" id="FBgn0032642"/>
    </source>
</evidence>
<feature type="chain" id="PRO_0000221007" description="Ragulator complex protein LAMTOR3 homolog">
    <location>
        <begin position="1"/>
        <end position="124"/>
    </location>
</feature>
<accession>Q9VJD2</accession>
<gene>
    <name evidence="3 5" type="primary">Lamtor3</name>
    <name evidence="5" type="ORF">CG5110</name>
</gene>
<comment type="function">
    <text evidence="2">Regulator of the TOR pathway, a signaling cascade that promotes cell growth in response to growth factors, energy levels, and amino acids. As part of the Ragulator complex, may activate the TOR signaling cascade in response to amino acids.</text>
</comment>
<comment type="subunit">
    <text evidence="1">Part of the Ragulator complex composed of Lamtor3, Lamtor2, CG14184, CG14812, and Lamtor4.</text>
</comment>
<comment type="interaction">
    <interactant intactId="EBI-111967">
        <id>Q9VJD2</id>
    </interactant>
    <interactant intactId="EBI-98229">
        <id>Q9V8I2</id>
        <label>Lamtor2</label>
    </interactant>
    <organismsDiffer>false</organismsDiffer>
    <experiments>6</experiments>
</comment>
<comment type="similarity">
    <text evidence="4">Belongs to the LAMTOR3 family.</text>
</comment>
<name>LTOR3_DROME</name>
<keyword id="KW-1185">Reference proteome</keyword>
<sequence length="124" mass="13781">MSDDIKKYLDGLLQKVSGLYVIQITDRDGVPLLRVSQEKNVDFALMPSFIPTFTTACDQASKLGLGRNKTIISMYSNYQVVQMNKLPLILTFVGAENCNTGHILALEHQVDGYLEDIKQAVTEA</sequence>
<reference key="1">
    <citation type="journal article" date="2000" name="Science">
        <title>The genome sequence of Drosophila melanogaster.</title>
        <authorList>
            <person name="Adams M.D."/>
            <person name="Celniker S.E."/>
            <person name="Holt R.A."/>
            <person name="Evans C.A."/>
            <person name="Gocayne J.D."/>
            <person name="Amanatides P.G."/>
            <person name="Scherer S.E."/>
            <person name="Li P.W."/>
            <person name="Hoskins R.A."/>
            <person name="Galle R.F."/>
            <person name="George R.A."/>
            <person name="Lewis S.E."/>
            <person name="Richards S."/>
            <person name="Ashburner M."/>
            <person name="Henderson S.N."/>
            <person name="Sutton G.G."/>
            <person name="Wortman J.R."/>
            <person name="Yandell M.D."/>
            <person name="Zhang Q."/>
            <person name="Chen L.X."/>
            <person name="Brandon R.C."/>
            <person name="Rogers Y.-H.C."/>
            <person name="Blazej R.G."/>
            <person name="Champe M."/>
            <person name="Pfeiffer B.D."/>
            <person name="Wan K.H."/>
            <person name="Doyle C."/>
            <person name="Baxter E.G."/>
            <person name="Helt G."/>
            <person name="Nelson C.R."/>
            <person name="Miklos G.L.G."/>
            <person name="Abril J.F."/>
            <person name="Agbayani A."/>
            <person name="An H.-J."/>
            <person name="Andrews-Pfannkoch C."/>
            <person name="Baldwin D."/>
            <person name="Ballew R.M."/>
            <person name="Basu A."/>
            <person name="Baxendale J."/>
            <person name="Bayraktaroglu L."/>
            <person name="Beasley E.M."/>
            <person name="Beeson K.Y."/>
            <person name="Benos P.V."/>
            <person name="Berman B.P."/>
            <person name="Bhandari D."/>
            <person name="Bolshakov S."/>
            <person name="Borkova D."/>
            <person name="Botchan M.R."/>
            <person name="Bouck J."/>
            <person name="Brokstein P."/>
            <person name="Brottier P."/>
            <person name="Burtis K.C."/>
            <person name="Busam D.A."/>
            <person name="Butler H."/>
            <person name="Cadieu E."/>
            <person name="Center A."/>
            <person name="Chandra I."/>
            <person name="Cherry J.M."/>
            <person name="Cawley S."/>
            <person name="Dahlke C."/>
            <person name="Davenport L.B."/>
            <person name="Davies P."/>
            <person name="de Pablos B."/>
            <person name="Delcher A."/>
            <person name="Deng Z."/>
            <person name="Mays A.D."/>
            <person name="Dew I."/>
            <person name="Dietz S.M."/>
            <person name="Dodson K."/>
            <person name="Doup L.E."/>
            <person name="Downes M."/>
            <person name="Dugan-Rocha S."/>
            <person name="Dunkov B.C."/>
            <person name="Dunn P."/>
            <person name="Durbin K.J."/>
            <person name="Evangelista C.C."/>
            <person name="Ferraz C."/>
            <person name="Ferriera S."/>
            <person name="Fleischmann W."/>
            <person name="Fosler C."/>
            <person name="Gabrielian A.E."/>
            <person name="Garg N.S."/>
            <person name="Gelbart W.M."/>
            <person name="Glasser K."/>
            <person name="Glodek A."/>
            <person name="Gong F."/>
            <person name="Gorrell J.H."/>
            <person name="Gu Z."/>
            <person name="Guan P."/>
            <person name="Harris M."/>
            <person name="Harris N.L."/>
            <person name="Harvey D.A."/>
            <person name="Heiman T.J."/>
            <person name="Hernandez J.R."/>
            <person name="Houck J."/>
            <person name="Hostin D."/>
            <person name="Houston K.A."/>
            <person name="Howland T.J."/>
            <person name="Wei M.-H."/>
            <person name="Ibegwam C."/>
            <person name="Jalali M."/>
            <person name="Kalush F."/>
            <person name="Karpen G.H."/>
            <person name="Ke Z."/>
            <person name="Kennison J.A."/>
            <person name="Ketchum K.A."/>
            <person name="Kimmel B.E."/>
            <person name="Kodira C.D."/>
            <person name="Kraft C.L."/>
            <person name="Kravitz S."/>
            <person name="Kulp D."/>
            <person name="Lai Z."/>
            <person name="Lasko P."/>
            <person name="Lei Y."/>
            <person name="Levitsky A.A."/>
            <person name="Li J.H."/>
            <person name="Li Z."/>
            <person name="Liang Y."/>
            <person name="Lin X."/>
            <person name="Liu X."/>
            <person name="Mattei B."/>
            <person name="McIntosh T.C."/>
            <person name="McLeod M.P."/>
            <person name="McPherson D."/>
            <person name="Merkulov G."/>
            <person name="Milshina N.V."/>
            <person name="Mobarry C."/>
            <person name="Morris J."/>
            <person name="Moshrefi A."/>
            <person name="Mount S.M."/>
            <person name="Moy M."/>
            <person name="Murphy B."/>
            <person name="Murphy L."/>
            <person name="Muzny D.M."/>
            <person name="Nelson D.L."/>
            <person name="Nelson D.R."/>
            <person name="Nelson K.A."/>
            <person name="Nixon K."/>
            <person name="Nusskern D.R."/>
            <person name="Pacleb J.M."/>
            <person name="Palazzolo M."/>
            <person name="Pittman G.S."/>
            <person name="Pan S."/>
            <person name="Pollard J."/>
            <person name="Puri V."/>
            <person name="Reese M.G."/>
            <person name="Reinert K."/>
            <person name="Remington K."/>
            <person name="Saunders R.D.C."/>
            <person name="Scheeler F."/>
            <person name="Shen H."/>
            <person name="Shue B.C."/>
            <person name="Siden-Kiamos I."/>
            <person name="Simpson M."/>
            <person name="Skupski M.P."/>
            <person name="Smith T.J."/>
            <person name="Spier E."/>
            <person name="Spradling A.C."/>
            <person name="Stapleton M."/>
            <person name="Strong R."/>
            <person name="Sun E."/>
            <person name="Svirskas R."/>
            <person name="Tector C."/>
            <person name="Turner R."/>
            <person name="Venter E."/>
            <person name="Wang A.H."/>
            <person name="Wang X."/>
            <person name="Wang Z.-Y."/>
            <person name="Wassarman D.A."/>
            <person name="Weinstock G.M."/>
            <person name="Weissenbach J."/>
            <person name="Williams S.M."/>
            <person name="Woodage T."/>
            <person name="Worley K.C."/>
            <person name="Wu D."/>
            <person name="Yang S."/>
            <person name="Yao Q.A."/>
            <person name="Ye J."/>
            <person name="Yeh R.-F."/>
            <person name="Zaveri J.S."/>
            <person name="Zhan M."/>
            <person name="Zhang G."/>
            <person name="Zhao Q."/>
            <person name="Zheng L."/>
            <person name="Zheng X.H."/>
            <person name="Zhong F.N."/>
            <person name="Zhong W."/>
            <person name="Zhou X."/>
            <person name="Zhu S.C."/>
            <person name="Zhu X."/>
            <person name="Smith H.O."/>
            <person name="Gibbs R.A."/>
            <person name="Myers E.W."/>
            <person name="Rubin G.M."/>
            <person name="Venter J.C."/>
        </authorList>
    </citation>
    <scope>NUCLEOTIDE SEQUENCE [LARGE SCALE GENOMIC DNA]</scope>
    <source>
        <strain>Berkeley</strain>
    </source>
</reference>
<reference key="2">
    <citation type="journal article" date="2002" name="Genome Biol.">
        <title>Annotation of the Drosophila melanogaster euchromatic genome: a systematic review.</title>
        <authorList>
            <person name="Misra S."/>
            <person name="Crosby M.A."/>
            <person name="Mungall C.J."/>
            <person name="Matthews B.B."/>
            <person name="Campbell K.S."/>
            <person name="Hradecky P."/>
            <person name="Huang Y."/>
            <person name="Kaminker J.S."/>
            <person name="Millburn G.H."/>
            <person name="Prochnik S.E."/>
            <person name="Smith C.D."/>
            <person name="Tupy J.L."/>
            <person name="Whitfield E.J."/>
            <person name="Bayraktaroglu L."/>
            <person name="Berman B.P."/>
            <person name="Bettencourt B.R."/>
            <person name="Celniker S.E."/>
            <person name="de Grey A.D.N.J."/>
            <person name="Drysdale R.A."/>
            <person name="Harris N.L."/>
            <person name="Richter J."/>
            <person name="Russo S."/>
            <person name="Schroeder A.J."/>
            <person name="Shu S.Q."/>
            <person name="Stapleton M."/>
            <person name="Yamada C."/>
            <person name="Ashburner M."/>
            <person name="Gelbart W.M."/>
            <person name="Rubin G.M."/>
            <person name="Lewis S.E."/>
        </authorList>
    </citation>
    <scope>GENOME REANNOTATION</scope>
    <source>
        <strain>Berkeley</strain>
    </source>
</reference>
<reference key="3">
    <citation type="journal article" date="2002" name="Genome Biol.">
        <title>A Drosophila full-length cDNA resource.</title>
        <authorList>
            <person name="Stapleton M."/>
            <person name="Carlson J.W."/>
            <person name="Brokstein P."/>
            <person name="Yu C."/>
            <person name="Champe M."/>
            <person name="George R.A."/>
            <person name="Guarin H."/>
            <person name="Kronmiller B."/>
            <person name="Pacleb J.M."/>
            <person name="Park S."/>
            <person name="Wan K.H."/>
            <person name="Rubin G.M."/>
            <person name="Celniker S.E."/>
        </authorList>
    </citation>
    <scope>NUCLEOTIDE SEQUENCE [LARGE SCALE MRNA]</scope>
    <source>
        <strain>Berkeley</strain>
        <tissue>Embryo</tissue>
    </source>
</reference>
<reference key="4">
    <citation type="journal article" date="2010" name="Cell">
        <title>Ragulator-Rag complex targets mTORC1 to the lysosomal surface and is necessary for its activation by amino acids.</title>
        <authorList>
            <person name="Sancak Y."/>
            <person name="Bar-Peled L."/>
            <person name="Zoncu R."/>
            <person name="Markhard A.L."/>
            <person name="Nada S."/>
            <person name="Sabatini D.M."/>
        </authorList>
    </citation>
    <scope>FUNCTION</scope>
</reference>
<dbReference type="EMBL" id="AE014134">
    <property type="protein sequence ID" value="AAF53620.1"/>
    <property type="molecule type" value="Genomic_DNA"/>
</dbReference>
<dbReference type="EMBL" id="AY071010">
    <property type="protein sequence ID" value="AAL48632.1"/>
    <property type="molecule type" value="mRNA"/>
</dbReference>
<dbReference type="RefSeq" id="NP_001246062.1">
    <property type="nucleotide sequence ID" value="NM_001259133.2"/>
</dbReference>
<dbReference type="RefSeq" id="NP_609843.1">
    <property type="nucleotide sequence ID" value="NM_135999.4"/>
</dbReference>
<dbReference type="SMR" id="Q9VJD2"/>
<dbReference type="BioGRID" id="61051">
    <property type="interactions" value="6"/>
</dbReference>
<dbReference type="ComplexPortal" id="CPX-2709">
    <property type="entry name" value="Ragulator complex"/>
</dbReference>
<dbReference type="DIP" id="DIP-17874N"/>
<dbReference type="FunCoup" id="Q9VJD2">
    <property type="interactions" value="800"/>
</dbReference>
<dbReference type="IntAct" id="Q9VJD2">
    <property type="interactions" value="3"/>
</dbReference>
<dbReference type="STRING" id="7227.FBpp0297292"/>
<dbReference type="PaxDb" id="7227-FBpp0297292"/>
<dbReference type="DNASU" id="35055"/>
<dbReference type="EnsemblMetazoa" id="FBtr0080983">
    <property type="protein sequence ID" value="FBpp0080536"/>
    <property type="gene ID" value="FBgn0032642"/>
</dbReference>
<dbReference type="EnsemblMetazoa" id="FBtr0306162">
    <property type="protein sequence ID" value="FBpp0297292"/>
    <property type="gene ID" value="FBgn0032642"/>
</dbReference>
<dbReference type="GeneID" id="35055"/>
<dbReference type="KEGG" id="dme:Dmel_CG5110"/>
<dbReference type="UCSC" id="CG5110-RA">
    <property type="organism name" value="d. melanogaster"/>
</dbReference>
<dbReference type="AGR" id="FB:FBgn0032642"/>
<dbReference type="CTD" id="8649"/>
<dbReference type="FlyBase" id="FBgn0032642">
    <property type="gene designation" value="Lamtor3"/>
</dbReference>
<dbReference type="VEuPathDB" id="VectorBase:FBgn0032642"/>
<dbReference type="eggNOG" id="ENOG502RYGZ">
    <property type="taxonomic scope" value="Eukaryota"/>
</dbReference>
<dbReference type="GeneTree" id="ENSGT00390000013159"/>
<dbReference type="HOGENOM" id="CLU_134641_0_0_1"/>
<dbReference type="InParanoid" id="Q9VJD2"/>
<dbReference type="OMA" id="YQVIQMN"/>
<dbReference type="OrthoDB" id="343907at2759"/>
<dbReference type="PhylomeDB" id="Q9VJD2"/>
<dbReference type="Reactome" id="R-DME-1632852">
    <property type="pathway name" value="Macroautophagy"/>
</dbReference>
<dbReference type="Reactome" id="R-DME-165159">
    <property type="pathway name" value="MTOR signalling"/>
</dbReference>
<dbReference type="Reactome" id="R-DME-166208">
    <property type="pathway name" value="mTORC1-mediated signalling"/>
</dbReference>
<dbReference type="Reactome" id="R-DME-380972">
    <property type="pathway name" value="Energy dependent regulation of mTOR by LKB1-AMPK"/>
</dbReference>
<dbReference type="Reactome" id="R-DME-5628897">
    <property type="pathway name" value="TP53 Regulates Metabolic Genes"/>
</dbReference>
<dbReference type="Reactome" id="R-DME-5674135">
    <property type="pathway name" value="MAP2K and MAPK activation"/>
</dbReference>
<dbReference type="Reactome" id="R-DME-6798695">
    <property type="pathway name" value="Neutrophil degranulation"/>
</dbReference>
<dbReference type="Reactome" id="R-DME-8943724">
    <property type="pathway name" value="Regulation of PTEN gene transcription"/>
</dbReference>
<dbReference type="Reactome" id="R-DME-9639288">
    <property type="pathway name" value="Amino acids regulate mTORC1"/>
</dbReference>
<dbReference type="BioGRID-ORCS" id="35055">
    <property type="hits" value="0 hits in 1 CRISPR screen"/>
</dbReference>
<dbReference type="GenomeRNAi" id="35055"/>
<dbReference type="PRO" id="PR:Q9VJD2"/>
<dbReference type="Proteomes" id="UP000000803">
    <property type="component" value="Chromosome 2L"/>
</dbReference>
<dbReference type="Bgee" id="FBgn0032642">
    <property type="expression patterns" value="Expressed in adult middle midgut class I enteroendocrine cell in adult midgut (Drosophila) and 119 other cell types or tissues"/>
</dbReference>
<dbReference type="ExpressionAtlas" id="Q9VJD2">
    <property type="expression patterns" value="baseline and differential"/>
</dbReference>
<dbReference type="GO" id="GO:0071986">
    <property type="term" value="C:Ragulator complex"/>
    <property type="evidence" value="ECO:0000315"/>
    <property type="project" value="FlyBase"/>
</dbReference>
<dbReference type="GO" id="GO:0071230">
    <property type="term" value="P:cellular response to amino acid stimulus"/>
    <property type="evidence" value="ECO:0000315"/>
    <property type="project" value="FlyBase"/>
</dbReference>
<dbReference type="GO" id="GO:0032008">
    <property type="term" value="P:positive regulation of TOR signaling"/>
    <property type="evidence" value="ECO:0000315"/>
    <property type="project" value="UniProtKB"/>
</dbReference>
<dbReference type="GO" id="GO:1904263">
    <property type="term" value="P:positive regulation of TORC1 signaling"/>
    <property type="evidence" value="ECO:0000315"/>
    <property type="project" value="FlyBase"/>
</dbReference>
<dbReference type="GO" id="GO:0008104">
    <property type="term" value="P:protein localization"/>
    <property type="evidence" value="ECO:0000250"/>
    <property type="project" value="UniProtKB"/>
</dbReference>
<dbReference type="FunFam" id="3.30.450.30:FF:000003">
    <property type="entry name" value="ragulator complex protein LAMTOR3 homolog"/>
    <property type="match status" value="1"/>
</dbReference>
<dbReference type="Gene3D" id="3.30.450.30">
    <property type="entry name" value="Dynein light chain 2a, cytoplasmic"/>
    <property type="match status" value="1"/>
</dbReference>
<dbReference type="InterPro" id="IPR015019">
    <property type="entry name" value="LAMTOR3"/>
</dbReference>
<dbReference type="PANTHER" id="PTHR13378:SF1">
    <property type="entry name" value="RAGULATOR COMPLEX PROTEIN LAMTOR3"/>
    <property type="match status" value="1"/>
</dbReference>
<dbReference type="PANTHER" id="PTHR13378">
    <property type="entry name" value="REGULATOR COMPLEX PROTEIN LAMTOR3"/>
    <property type="match status" value="1"/>
</dbReference>
<dbReference type="Pfam" id="PF08923">
    <property type="entry name" value="MAPKK1_Int"/>
    <property type="match status" value="1"/>
</dbReference>
<dbReference type="SMART" id="SM01278">
    <property type="entry name" value="MAPKK1_Int"/>
    <property type="match status" value="1"/>
</dbReference>
<dbReference type="SUPFAM" id="SSF103196">
    <property type="entry name" value="Roadblock/LC7 domain"/>
    <property type="match status" value="1"/>
</dbReference>
<protein>
    <recommendedName>
        <fullName evidence="3">Ragulator complex protein LAMTOR3 homolog</fullName>
    </recommendedName>
    <alternativeName>
        <fullName evidence="3">Late endosomal/lysosomal adaptor and MAPK and MTOR activator 3</fullName>
    </alternativeName>
</protein>
<proteinExistence type="evidence at protein level"/>
<organism>
    <name type="scientific">Drosophila melanogaster</name>
    <name type="common">Fruit fly</name>
    <dbReference type="NCBI Taxonomy" id="7227"/>
    <lineage>
        <taxon>Eukaryota</taxon>
        <taxon>Metazoa</taxon>
        <taxon>Ecdysozoa</taxon>
        <taxon>Arthropoda</taxon>
        <taxon>Hexapoda</taxon>
        <taxon>Insecta</taxon>
        <taxon>Pterygota</taxon>
        <taxon>Neoptera</taxon>
        <taxon>Endopterygota</taxon>
        <taxon>Diptera</taxon>
        <taxon>Brachycera</taxon>
        <taxon>Muscomorpha</taxon>
        <taxon>Ephydroidea</taxon>
        <taxon>Drosophilidae</taxon>
        <taxon>Drosophila</taxon>
        <taxon>Sophophora</taxon>
    </lineage>
</organism>